<evidence type="ECO:0000255" key="1">
    <source>
        <dbReference type="HAMAP-Rule" id="MF_01465"/>
    </source>
</evidence>
<comment type="function">
    <text evidence="1">The central subunit of the protein translocation channel SecYEG. Consists of two halves formed by TMs 1-5 and 6-10. These two domains form a lateral gate at the front which open onto the bilayer between TMs 2 and 7, and are clamped together by SecE at the back. The channel is closed by both a pore ring composed of hydrophobic SecY resides and a short helix (helix 2A) on the extracellular side of the membrane which forms a plug. The plug probably moves laterally to allow the channel to open. The ring and the pore may move independently.</text>
</comment>
<comment type="subunit">
    <text evidence="1">Component of the Sec protein translocase complex. Heterotrimer consisting of SecY, SecE and SecG subunits. The heterotrimers can form oligomers, although 1 heterotrimer is thought to be able to translocate proteins. Interacts with the ribosome. Interacts with SecDF, and other proteins may be involved. Interacts with SecA.</text>
</comment>
<comment type="subcellular location">
    <subcellularLocation>
        <location evidence="1">Cell inner membrane</location>
        <topology evidence="1">Multi-pass membrane protein</topology>
    </subcellularLocation>
</comment>
<comment type="similarity">
    <text evidence="1">Belongs to the SecY/SEC61-alpha family.</text>
</comment>
<reference key="1">
    <citation type="journal article" date="2000" name="Nucleic Acids Res.">
        <title>Genome sequences of Chlamydia trachomatis MoPn and Chlamydia pneumoniae AR39.</title>
        <authorList>
            <person name="Read T.D."/>
            <person name="Brunham R.C."/>
            <person name="Shen C."/>
            <person name="Gill S.R."/>
            <person name="Heidelberg J.F."/>
            <person name="White O."/>
            <person name="Hickey E.K."/>
            <person name="Peterson J.D."/>
            <person name="Utterback T.R."/>
            <person name="Berry K.J."/>
            <person name="Bass S."/>
            <person name="Linher K.D."/>
            <person name="Weidman J.F."/>
            <person name="Khouri H.M."/>
            <person name="Craven B."/>
            <person name="Bowman C."/>
            <person name="Dodson R.J."/>
            <person name="Gwinn M.L."/>
            <person name="Nelson W.C."/>
            <person name="DeBoy R.T."/>
            <person name="Kolonay J.F."/>
            <person name="McClarty G."/>
            <person name="Salzberg S.L."/>
            <person name="Eisen J.A."/>
            <person name="Fraser C.M."/>
        </authorList>
    </citation>
    <scope>NUCLEOTIDE SEQUENCE [LARGE SCALE GENOMIC DNA]</scope>
    <source>
        <strain>MoPn / Nigg</strain>
    </source>
</reference>
<name>SECY_CHLMU</name>
<dbReference type="EMBL" id="AE002160">
    <property type="protein sequence ID" value="AAF39600.1"/>
    <property type="molecule type" value="Genomic_DNA"/>
</dbReference>
<dbReference type="PIR" id="E81663">
    <property type="entry name" value="E81663"/>
</dbReference>
<dbReference type="RefSeq" id="WP_010231576.1">
    <property type="nucleotide sequence ID" value="NZ_CP063055.1"/>
</dbReference>
<dbReference type="SMR" id="Q9PJN1"/>
<dbReference type="GeneID" id="1246164"/>
<dbReference type="KEGG" id="cmu:TC_0797"/>
<dbReference type="eggNOG" id="COG0201">
    <property type="taxonomic scope" value="Bacteria"/>
</dbReference>
<dbReference type="HOGENOM" id="CLU_030313_0_1_0"/>
<dbReference type="OrthoDB" id="9809248at2"/>
<dbReference type="Proteomes" id="UP000000800">
    <property type="component" value="Chromosome"/>
</dbReference>
<dbReference type="GO" id="GO:0005886">
    <property type="term" value="C:plasma membrane"/>
    <property type="evidence" value="ECO:0007669"/>
    <property type="project" value="UniProtKB-SubCell"/>
</dbReference>
<dbReference type="GO" id="GO:0065002">
    <property type="term" value="P:intracellular protein transmembrane transport"/>
    <property type="evidence" value="ECO:0007669"/>
    <property type="project" value="UniProtKB-UniRule"/>
</dbReference>
<dbReference type="GO" id="GO:0006605">
    <property type="term" value="P:protein targeting"/>
    <property type="evidence" value="ECO:0007669"/>
    <property type="project" value="UniProtKB-UniRule"/>
</dbReference>
<dbReference type="GO" id="GO:0043952">
    <property type="term" value="P:protein transport by the Sec complex"/>
    <property type="evidence" value="ECO:0007669"/>
    <property type="project" value="UniProtKB-UniRule"/>
</dbReference>
<dbReference type="FunFam" id="1.10.3370.10:FF:000001">
    <property type="entry name" value="Preprotein translocase subunit SecY"/>
    <property type="match status" value="1"/>
</dbReference>
<dbReference type="Gene3D" id="1.10.3370.10">
    <property type="entry name" value="SecY subunit domain"/>
    <property type="match status" value="1"/>
</dbReference>
<dbReference type="HAMAP" id="MF_01465">
    <property type="entry name" value="SecY"/>
    <property type="match status" value="1"/>
</dbReference>
<dbReference type="InterPro" id="IPR026593">
    <property type="entry name" value="SecY"/>
</dbReference>
<dbReference type="InterPro" id="IPR002208">
    <property type="entry name" value="SecY/SEC61-alpha"/>
</dbReference>
<dbReference type="InterPro" id="IPR030659">
    <property type="entry name" value="SecY_CS"/>
</dbReference>
<dbReference type="InterPro" id="IPR023201">
    <property type="entry name" value="SecY_dom_sf"/>
</dbReference>
<dbReference type="NCBIfam" id="TIGR00967">
    <property type="entry name" value="3a0501s007"/>
    <property type="match status" value="1"/>
</dbReference>
<dbReference type="PANTHER" id="PTHR10906">
    <property type="entry name" value="SECY/SEC61-ALPHA FAMILY MEMBER"/>
    <property type="match status" value="1"/>
</dbReference>
<dbReference type="Pfam" id="PF00344">
    <property type="entry name" value="SecY"/>
    <property type="match status" value="1"/>
</dbReference>
<dbReference type="PIRSF" id="PIRSF004557">
    <property type="entry name" value="SecY"/>
    <property type="match status" value="1"/>
</dbReference>
<dbReference type="PRINTS" id="PR00303">
    <property type="entry name" value="SECYTRNLCASE"/>
</dbReference>
<dbReference type="SUPFAM" id="SSF103491">
    <property type="entry name" value="Preprotein translocase SecY subunit"/>
    <property type="match status" value="1"/>
</dbReference>
<dbReference type="PROSITE" id="PS00755">
    <property type="entry name" value="SECY_1"/>
    <property type="match status" value="1"/>
</dbReference>
<dbReference type="PROSITE" id="PS00756">
    <property type="entry name" value="SECY_2"/>
    <property type="match status" value="1"/>
</dbReference>
<gene>
    <name evidence="1" type="primary">secY</name>
    <name type="ordered locus">TC_0797</name>
</gene>
<feature type="chain" id="PRO_0000131717" description="Protein translocase subunit SecY">
    <location>
        <begin position="1"/>
        <end position="457"/>
    </location>
</feature>
<feature type="transmembrane region" description="Helical" evidence="1">
    <location>
        <begin position="17"/>
        <end position="37"/>
    </location>
</feature>
<feature type="transmembrane region" description="Helical" evidence="1">
    <location>
        <begin position="75"/>
        <end position="95"/>
    </location>
</feature>
<feature type="transmembrane region" description="Helical" evidence="1">
    <location>
        <begin position="120"/>
        <end position="140"/>
    </location>
</feature>
<feature type="transmembrane region" description="Helical" evidence="1">
    <location>
        <begin position="163"/>
        <end position="183"/>
    </location>
</feature>
<feature type="transmembrane region" description="Helical" evidence="1">
    <location>
        <begin position="195"/>
        <end position="215"/>
    </location>
</feature>
<feature type="transmembrane region" description="Helical" evidence="1">
    <location>
        <begin position="230"/>
        <end position="250"/>
    </location>
</feature>
<feature type="transmembrane region" description="Helical" evidence="1">
    <location>
        <begin position="287"/>
        <end position="307"/>
    </location>
</feature>
<feature type="transmembrane region" description="Helical" evidence="1">
    <location>
        <begin position="326"/>
        <end position="346"/>
    </location>
</feature>
<feature type="transmembrane region" description="Helical" evidence="1">
    <location>
        <begin position="386"/>
        <end position="406"/>
    </location>
</feature>
<feature type="transmembrane region" description="Helical" evidence="1">
    <location>
        <begin position="412"/>
        <end position="432"/>
    </location>
</feature>
<protein>
    <recommendedName>
        <fullName evidence="1">Protein translocase subunit SecY</fullName>
    </recommendedName>
</protein>
<keyword id="KW-0997">Cell inner membrane</keyword>
<keyword id="KW-1003">Cell membrane</keyword>
<keyword id="KW-0472">Membrane</keyword>
<keyword id="KW-0653">Protein transport</keyword>
<keyword id="KW-0811">Translocation</keyword>
<keyword id="KW-0812">Transmembrane</keyword>
<keyword id="KW-1133">Transmembrane helix</keyword>
<keyword id="KW-0813">Transport</keyword>
<sequence length="457" mass="50265">MATLRQVFSISELRQKIFFTFSLLALCRIGVFIPVPGINGDRAVAYFNQLLGSSQNLFQLADIFSGGAFAQMTVIALGVVPYISASIIVQLLVVFMPTLQREMREAPDQGKRKLGRMTRLFTLLLACVQSLLFAKFALRMNLVVPGIVLPAMLSLKLFGIPCVFYLTTVVVMTTGTLLLMWIGEQISDKGIGNGISLIITLGMLASFPSVLGSIFNKLNLGSQDPSEFGIVSLLVLCAVFVFVLMATVLIIEGVRKVPVQHARRIIGRREVLGGGSYLPLKVNYAGVIPVIFASSLLMFPATIGQFLSSESSWLKRIATMLSPGSVVYSIFYVLLIIFFTYFWTATQFRPEQIASEMKKNGAFIPGIRQGKPTQSYLEYTMNRVTLLGAVFLAVVAILPSILGRILRVDANVSYFLGGTAMLIVVGVVLDTMKQIDAFLLVRRYDGVLKKDRPKGRR</sequence>
<organism>
    <name type="scientific">Chlamydia muridarum (strain MoPn / Nigg)</name>
    <dbReference type="NCBI Taxonomy" id="243161"/>
    <lineage>
        <taxon>Bacteria</taxon>
        <taxon>Pseudomonadati</taxon>
        <taxon>Chlamydiota</taxon>
        <taxon>Chlamydiia</taxon>
        <taxon>Chlamydiales</taxon>
        <taxon>Chlamydiaceae</taxon>
        <taxon>Chlamydia/Chlamydophila group</taxon>
        <taxon>Chlamydia</taxon>
    </lineage>
</organism>
<proteinExistence type="inferred from homology"/>
<accession>Q9PJN1</accession>